<protein>
    <recommendedName>
        <fullName>Malonate decarboxylase acyl carrier protein</fullName>
    </recommendedName>
    <alternativeName>
        <fullName>Malonate decarboxylase subunit delta</fullName>
    </alternativeName>
</protein>
<comment type="function">
    <text>Subunit of malonate decarboxylase, it is an acyl carrier protein to which acetyl and malonyl thioester residues are bound via a 2'-(5''-phosphoribosyl)-3'-dephospho-CoA prosthetic group and turn over during the catalytic mechanism.</text>
</comment>
<comment type="subcellular location">
    <subcellularLocation>
        <location evidence="1">Cytoplasm</location>
    </subcellularLocation>
</comment>
<comment type="PTM">
    <text>Covalently binds the prosthetic group of malonate decarboxylase.</text>
</comment>
<comment type="similarity">
    <text evidence="2">Belongs to the MdcC family.</text>
</comment>
<name>MDCC_MALRU</name>
<dbReference type="EMBL" id="U87980">
    <property type="protein sequence ID" value="AAC45401.1"/>
    <property type="molecule type" value="Genomic_DNA"/>
</dbReference>
<dbReference type="SMR" id="O06925"/>
<dbReference type="TCDB" id="3.B.1.1.4">
    <property type="family name" value="the na(+)-transporting carboxylic acid decarboxylase (nat-dc) family"/>
</dbReference>
<dbReference type="BioCyc" id="MetaCyc:MONOMER-14283"/>
<dbReference type="GO" id="GO:0005737">
    <property type="term" value="C:cytoplasm"/>
    <property type="evidence" value="ECO:0007669"/>
    <property type="project" value="UniProtKB-SubCell"/>
</dbReference>
<dbReference type="HAMAP" id="MF_00710">
    <property type="entry name" value="Malonate_deCO2ase_dsu"/>
    <property type="match status" value="1"/>
</dbReference>
<dbReference type="InterPro" id="IPR023439">
    <property type="entry name" value="Mal_deCO2ase/Cit_lyase_ACP"/>
</dbReference>
<dbReference type="InterPro" id="IPR009662">
    <property type="entry name" value="Malonate_deCO2ase_dsu"/>
</dbReference>
<dbReference type="NCBIfam" id="TIGR03130">
    <property type="entry name" value="malonate_delta"/>
    <property type="match status" value="1"/>
</dbReference>
<dbReference type="Pfam" id="PF06857">
    <property type="entry name" value="ACP"/>
    <property type="match status" value="1"/>
</dbReference>
<keyword id="KW-0963">Cytoplasm</keyword>
<keyword id="KW-0903">Direct protein sequencing</keyword>
<keyword id="KW-0597">Phosphoprotein</keyword>
<gene>
    <name type="primary">mdcC</name>
    <name type="synonym">madE</name>
</gene>
<accession>O06925</accession>
<evidence type="ECO:0000269" key="1">
    <source>
    </source>
</evidence>
<evidence type="ECO:0000305" key="2"/>
<sequence length="112" mass="12256">MEGMLNELNFKFKSENPVDVVLPKHHYGVVGSGDLEVLLKKHELEGAVEIRVVSPVRGFDHVWEKVLEKVISDAEVGNVAIEINDNNATPVVVALRLAQALSEAKSAEQSVN</sequence>
<feature type="chain" id="PRO_0000220286" description="Malonate decarboxylase acyl carrier protein">
    <location>
        <begin position="1"/>
        <end position="112"/>
    </location>
</feature>
<feature type="modified residue" description="O-(phosphoribosyl dephospho-coenzyme A)serine" evidence="1">
    <location>
        <position position="32"/>
    </location>
</feature>
<feature type="sequence conflict" description="In Ref. 2; AA sequence." evidence="2" ref="2">
    <location>
        <position position="26"/>
    </location>
</feature>
<proteinExistence type="evidence at protein level"/>
<reference key="1">
    <citation type="journal article" date="1997" name="Eur. J. Biochem.">
        <title>Sequence of a gene cluster from Malonomonas rubra encoding components of the malonate decarboxylase Na+ pump and evidence for their function.</title>
        <authorList>
            <person name="Berg M."/>
            <person name="Hilbi H."/>
            <person name="Dimroth P."/>
        </authorList>
    </citation>
    <scope>NUCLEOTIDE SEQUENCE [GENOMIC DNA]</scope>
    <source>
        <strain>DSM 9788 / GraMal2</strain>
    </source>
</reference>
<reference key="2">
    <citation type="journal article" date="1996" name="Biochemistry">
        <title>The acyl carrier protein of malonate decarboxylase of Malonomonas rubra contains 2'-(5''-phosphoribosyl)-3'-dephosphocoenzyme A as a prosthetic group.</title>
        <authorList>
            <person name="Berg M."/>
            <person name="Hilbi H."/>
            <person name="Dimroth P."/>
        </authorList>
    </citation>
    <scope>PROTEIN SEQUENCE OF 1-27</scope>
    <scope>SUBCELLULAR LOCATION</scope>
    <scope>PROSTHETIC GROUP AT SER-32</scope>
</reference>
<organism>
    <name type="scientific">Malonomonas rubra</name>
    <dbReference type="NCBI Taxonomy" id="57040"/>
    <lineage>
        <taxon>Bacteria</taxon>
        <taxon>Pseudomonadati</taxon>
        <taxon>Thermodesulfobacteriota</taxon>
        <taxon>Desulfuromonadia</taxon>
        <taxon>Desulfuromonadales</taxon>
        <taxon>Geopsychrobacteraceae</taxon>
        <taxon>Malonomonas</taxon>
    </lineage>
</organism>